<gene>
    <name evidence="2" type="primary">Ras85D</name>
    <name type="synonym">Ras1</name>
    <name type="ORF">GJ23844</name>
</gene>
<protein>
    <recommendedName>
        <fullName evidence="2">Ras-like protein 1</fullName>
        <ecNumber evidence="1">3.6.5.2</ecNumber>
    </recommendedName>
</protein>
<feature type="chain" id="PRO_0000363718" description="Ras-like protein 1" evidence="2">
    <location>
        <begin position="1"/>
        <end position="186"/>
    </location>
</feature>
<feature type="propeptide" id="PRO_0000363719" description="Removed in mature form" evidence="2">
    <location>
        <begin position="187"/>
        <end position="189"/>
    </location>
</feature>
<feature type="short sequence motif" description="Effector region">
    <location>
        <begin position="32"/>
        <end position="40"/>
    </location>
</feature>
<feature type="binding site" evidence="1">
    <location>
        <begin position="10"/>
        <end position="17"/>
    </location>
    <ligand>
        <name>GTP</name>
        <dbReference type="ChEBI" id="CHEBI:37565"/>
    </ligand>
</feature>
<feature type="binding site" evidence="1">
    <location>
        <begin position="57"/>
        <end position="61"/>
    </location>
    <ligand>
        <name>GTP</name>
        <dbReference type="ChEBI" id="CHEBI:37565"/>
    </ligand>
</feature>
<feature type="binding site" evidence="1">
    <location>
        <begin position="116"/>
        <end position="119"/>
    </location>
    <ligand>
        <name>GTP</name>
        <dbReference type="ChEBI" id="CHEBI:37565"/>
    </ligand>
</feature>
<feature type="modified residue" description="Cysteine methyl ester" evidence="2">
    <location>
        <position position="186"/>
    </location>
</feature>
<feature type="lipid moiety-binding region" description="S-geranylgeranyl cysteine" evidence="2">
    <location>
        <position position="186"/>
    </location>
</feature>
<reference evidence="4" key="1">
    <citation type="journal article" date="2007" name="Nature">
        <title>Evolution of genes and genomes on the Drosophila phylogeny.</title>
        <authorList>
            <consortium name="Drosophila 12 genomes consortium"/>
        </authorList>
    </citation>
    <scope>NUCLEOTIDE SEQUENCE [LARGE SCALE GENOMIC DNA]</scope>
    <source>
        <strain evidence="4">Tucson 15010-1051.87</strain>
    </source>
</reference>
<keyword id="KW-1003">Cell membrane</keyword>
<keyword id="KW-0342">GTP-binding</keyword>
<keyword id="KW-0378">Hydrolase</keyword>
<keyword id="KW-0449">Lipoprotein</keyword>
<keyword id="KW-0472">Membrane</keyword>
<keyword id="KW-0488">Methylation</keyword>
<keyword id="KW-0547">Nucleotide-binding</keyword>
<keyword id="KW-0636">Prenylation</keyword>
<keyword id="KW-1185">Reference proteome</keyword>
<dbReference type="EC" id="3.6.5.2" evidence="1"/>
<dbReference type="EMBL" id="CH940650">
    <property type="protein sequence ID" value="EDW66895.1"/>
    <property type="molecule type" value="Genomic_DNA"/>
</dbReference>
<dbReference type="RefSeq" id="XP_002053375.1">
    <property type="nucleotide sequence ID" value="XM_002053339.4"/>
</dbReference>
<dbReference type="RefSeq" id="XP_015027424.1">
    <property type="nucleotide sequence ID" value="XM_015171938.3"/>
</dbReference>
<dbReference type="RefSeq" id="XP_032290634.1">
    <property type="nucleotide sequence ID" value="XM_032434743.2"/>
</dbReference>
<dbReference type="RefSeq" id="XP_070063699.1">
    <property type="nucleotide sequence ID" value="XM_070207598.1"/>
</dbReference>
<dbReference type="SMR" id="B4LY29"/>
<dbReference type="FunCoup" id="B4LY29">
    <property type="interactions" value="1162"/>
</dbReference>
<dbReference type="STRING" id="7244.B4LY29"/>
<dbReference type="EnsemblMetazoa" id="FBtr0239769">
    <property type="protein sequence ID" value="FBpp0238261"/>
    <property type="gene ID" value="FBgn0085906"/>
</dbReference>
<dbReference type="EnsemblMetazoa" id="FBtr0435777">
    <property type="protein sequence ID" value="FBpp0392722"/>
    <property type="gene ID" value="FBgn0085906"/>
</dbReference>
<dbReference type="EnsemblMetazoa" id="XM_002053339.3">
    <property type="protein sequence ID" value="XP_002053375.1"/>
    <property type="gene ID" value="LOC6629799"/>
</dbReference>
<dbReference type="EnsemblMetazoa" id="XM_015171938.2">
    <property type="protein sequence ID" value="XP_015027424.1"/>
    <property type="gene ID" value="LOC6629799"/>
</dbReference>
<dbReference type="EnsemblMetazoa" id="XM_032434743.1">
    <property type="protein sequence ID" value="XP_032290634.1"/>
    <property type="gene ID" value="LOC6629799"/>
</dbReference>
<dbReference type="GeneID" id="6629799"/>
<dbReference type="KEGG" id="dvi:6629799"/>
<dbReference type="CTD" id="41140"/>
<dbReference type="eggNOG" id="KOG0395">
    <property type="taxonomic scope" value="Eukaryota"/>
</dbReference>
<dbReference type="HOGENOM" id="CLU_041217_9_8_1"/>
<dbReference type="InParanoid" id="B4LY29"/>
<dbReference type="OMA" id="CCGGCVI"/>
<dbReference type="OrthoDB" id="5976022at2759"/>
<dbReference type="PhylomeDB" id="B4LY29"/>
<dbReference type="ChiTaRS" id="Ras85D">
    <property type="organism name" value="fly"/>
</dbReference>
<dbReference type="Proteomes" id="UP000008792">
    <property type="component" value="Unassembled WGS sequence"/>
</dbReference>
<dbReference type="GO" id="GO:0016020">
    <property type="term" value="C:membrane"/>
    <property type="evidence" value="ECO:0000250"/>
    <property type="project" value="UniProtKB"/>
</dbReference>
<dbReference type="GO" id="GO:0005886">
    <property type="term" value="C:plasma membrane"/>
    <property type="evidence" value="ECO:0007669"/>
    <property type="project" value="UniProtKB-SubCell"/>
</dbReference>
<dbReference type="GO" id="GO:0003925">
    <property type="term" value="F:G protein activity"/>
    <property type="evidence" value="ECO:0007669"/>
    <property type="project" value="UniProtKB-EC"/>
</dbReference>
<dbReference type="GO" id="GO:0005525">
    <property type="term" value="F:GTP binding"/>
    <property type="evidence" value="ECO:0007669"/>
    <property type="project" value="UniProtKB-KW"/>
</dbReference>
<dbReference type="GO" id="GO:0043539">
    <property type="term" value="F:protein serine/threonine kinase activator activity"/>
    <property type="evidence" value="ECO:0007669"/>
    <property type="project" value="EnsemblMetazoa"/>
</dbReference>
<dbReference type="GO" id="GO:0007298">
    <property type="term" value="P:border follicle cell migration"/>
    <property type="evidence" value="ECO:0007669"/>
    <property type="project" value="EnsemblMetazoa"/>
</dbReference>
<dbReference type="GO" id="GO:0009267">
    <property type="term" value="P:cellular response to starvation"/>
    <property type="evidence" value="ECO:0007669"/>
    <property type="project" value="EnsemblMetazoa"/>
</dbReference>
<dbReference type="GO" id="GO:0030381">
    <property type="term" value="P:chorion-containing eggshell pattern formation"/>
    <property type="evidence" value="ECO:0007669"/>
    <property type="project" value="EnsemblMetazoa"/>
</dbReference>
<dbReference type="GO" id="GO:0051607">
    <property type="term" value="P:defense response to virus"/>
    <property type="evidence" value="ECO:0007669"/>
    <property type="project" value="EnsemblMetazoa"/>
</dbReference>
<dbReference type="GO" id="GO:0008340">
    <property type="term" value="P:determination of adult lifespan"/>
    <property type="evidence" value="ECO:0007669"/>
    <property type="project" value="EnsemblMetazoa"/>
</dbReference>
<dbReference type="GO" id="GO:0007395">
    <property type="term" value="P:dorsal closure, spreading of leading edge cells"/>
    <property type="evidence" value="ECO:0007669"/>
    <property type="project" value="EnsemblMetazoa"/>
</dbReference>
<dbReference type="GO" id="GO:0007173">
    <property type="term" value="P:epidermal growth factor receptor signaling pathway"/>
    <property type="evidence" value="ECO:0007669"/>
    <property type="project" value="EnsemblMetazoa"/>
</dbReference>
<dbReference type="GO" id="GO:0007427">
    <property type="term" value="P:epithelial cell migration, open tracheal system"/>
    <property type="evidence" value="ECO:0007669"/>
    <property type="project" value="EnsemblMetazoa"/>
</dbReference>
<dbReference type="GO" id="GO:0035088">
    <property type="term" value="P:establishment or maintenance of apical/basal cell polarity"/>
    <property type="evidence" value="ECO:0007669"/>
    <property type="project" value="EnsemblMetazoa"/>
</dbReference>
<dbReference type="GO" id="GO:0007455">
    <property type="term" value="P:eye-antennal disc morphogenesis"/>
    <property type="evidence" value="ECO:0007669"/>
    <property type="project" value="EnsemblMetazoa"/>
</dbReference>
<dbReference type="GO" id="GO:0008543">
    <property type="term" value="P:fibroblast growth factor receptor signaling pathway"/>
    <property type="evidence" value="ECO:0007669"/>
    <property type="project" value="EnsemblMetazoa"/>
</dbReference>
<dbReference type="GO" id="GO:0035099">
    <property type="term" value="P:hemocyte migration"/>
    <property type="evidence" value="ECO:0007669"/>
    <property type="project" value="EnsemblMetazoa"/>
</dbReference>
<dbReference type="GO" id="GO:0008586">
    <property type="term" value="P:imaginal disc-derived wing vein morphogenesis"/>
    <property type="evidence" value="ECO:0007669"/>
    <property type="project" value="EnsemblMetazoa"/>
</dbReference>
<dbReference type="GO" id="GO:0007474">
    <property type="term" value="P:imaginal disc-derived wing vein specification"/>
    <property type="evidence" value="ECO:0007669"/>
    <property type="project" value="EnsemblMetazoa"/>
</dbReference>
<dbReference type="GO" id="GO:0002168">
    <property type="term" value="P:instar larval development"/>
    <property type="evidence" value="ECO:0007669"/>
    <property type="project" value="EnsemblMetazoa"/>
</dbReference>
<dbReference type="GO" id="GO:0036335">
    <property type="term" value="P:intestinal stem cell homeostasis"/>
    <property type="evidence" value="ECO:0007669"/>
    <property type="project" value="EnsemblMetazoa"/>
</dbReference>
<dbReference type="GO" id="GO:0007479">
    <property type="term" value="P:leg disc proximal/distal pattern formation"/>
    <property type="evidence" value="ECO:0007669"/>
    <property type="project" value="EnsemblMetazoa"/>
</dbReference>
<dbReference type="GO" id="GO:0035170">
    <property type="term" value="P:lymph gland crystal cell differentiation"/>
    <property type="evidence" value="ECO:0007669"/>
    <property type="project" value="EnsemblMetazoa"/>
</dbReference>
<dbReference type="GO" id="GO:0035169">
    <property type="term" value="P:lymph gland plasmatocyte differentiation"/>
    <property type="evidence" value="ECO:0007669"/>
    <property type="project" value="EnsemblMetazoa"/>
</dbReference>
<dbReference type="GO" id="GO:0072002">
    <property type="term" value="P:Malpighian tubule development"/>
    <property type="evidence" value="ECO:0007669"/>
    <property type="project" value="EnsemblMetazoa"/>
</dbReference>
<dbReference type="GO" id="GO:0000165">
    <property type="term" value="P:MAPK cascade"/>
    <property type="evidence" value="ECO:0007669"/>
    <property type="project" value="EnsemblMetazoa"/>
</dbReference>
<dbReference type="GO" id="GO:0001710">
    <property type="term" value="P:mesodermal cell fate commitment"/>
    <property type="evidence" value="ECO:0007669"/>
    <property type="project" value="EnsemblMetazoa"/>
</dbReference>
<dbReference type="GO" id="GO:0048626">
    <property type="term" value="P:myoblast fate specification"/>
    <property type="evidence" value="ECO:0007669"/>
    <property type="project" value="EnsemblMetazoa"/>
</dbReference>
<dbReference type="GO" id="GO:2001234">
    <property type="term" value="P:negative regulation of apoptotic signaling pathway"/>
    <property type="evidence" value="ECO:0007669"/>
    <property type="project" value="EnsemblMetazoa"/>
</dbReference>
<dbReference type="GO" id="GO:0046673">
    <property type="term" value="P:negative regulation of compound eye retinal cell programmed cell death"/>
    <property type="evidence" value="ECO:0007669"/>
    <property type="project" value="EnsemblMetazoa"/>
</dbReference>
<dbReference type="GO" id="GO:0010629">
    <property type="term" value="P:negative regulation of gene expression"/>
    <property type="evidence" value="ECO:0007669"/>
    <property type="project" value="EnsemblMetazoa"/>
</dbReference>
<dbReference type="GO" id="GO:0016242">
    <property type="term" value="P:negative regulation of macroautophagy"/>
    <property type="evidence" value="ECO:0007669"/>
    <property type="project" value="EnsemblMetazoa"/>
</dbReference>
<dbReference type="GO" id="GO:0016318">
    <property type="term" value="P:ommatidial rotation"/>
    <property type="evidence" value="ECO:0007669"/>
    <property type="project" value="EnsemblMetazoa"/>
</dbReference>
<dbReference type="GO" id="GO:0007309">
    <property type="term" value="P:oocyte axis specification"/>
    <property type="evidence" value="ECO:0007669"/>
    <property type="project" value="EnsemblMetazoa"/>
</dbReference>
<dbReference type="GO" id="GO:0007422">
    <property type="term" value="P:peripheral nervous system development"/>
    <property type="evidence" value="ECO:0007669"/>
    <property type="project" value="EnsemblMetazoa"/>
</dbReference>
<dbReference type="GO" id="GO:0043703">
    <property type="term" value="P:photoreceptor cell fate determination"/>
    <property type="evidence" value="ECO:0007669"/>
    <property type="project" value="EnsemblMetazoa"/>
</dbReference>
<dbReference type="GO" id="GO:0008594">
    <property type="term" value="P:photoreceptor cell morphogenesis"/>
    <property type="evidence" value="ECO:0007669"/>
    <property type="project" value="EnsemblMetazoa"/>
</dbReference>
<dbReference type="GO" id="GO:0045793">
    <property type="term" value="P:positive regulation of cell size"/>
    <property type="evidence" value="ECO:0007669"/>
    <property type="project" value="EnsemblMetazoa"/>
</dbReference>
<dbReference type="GO" id="GO:0070374">
    <property type="term" value="P:positive regulation of ERK1 and ERK2 cascade"/>
    <property type="evidence" value="ECO:0007669"/>
    <property type="project" value="EnsemblMetazoa"/>
</dbReference>
<dbReference type="GO" id="GO:0035208">
    <property type="term" value="P:positive regulation of hemocyte proliferation"/>
    <property type="evidence" value="ECO:0007669"/>
    <property type="project" value="EnsemblMetazoa"/>
</dbReference>
<dbReference type="GO" id="GO:0046534">
    <property type="term" value="P:positive regulation of photoreceptor cell differentiation"/>
    <property type="evidence" value="ECO:0007669"/>
    <property type="project" value="EnsemblMetazoa"/>
</dbReference>
<dbReference type="GO" id="GO:1904263">
    <property type="term" value="P:positive regulation of TORC1 signaling"/>
    <property type="evidence" value="ECO:0007669"/>
    <property type="project" value="EnsemblMetazoa"/>
</dbReference>
<dbReference type="GO" id="GO:0045465">
    <property type="term" value="P:R8 cell differentiation"/>
    <property type="evidence" value="ECO:0007669"/>
    <property type="project" value="EnsemblMetazoa"/>
</dbReference>
<dbReference type="GO" id="GO:0007265">
    <property type="term" value="P:Ras protein signal transduction"/>
    <property type="evidence" value="ECO:0007669"/>
    <property type="project" value="EnsemblMetazoa"/>
</dbReference>
<dbReference type="GO" id="GO:0040014">
    <property type="term" value="P:regulation of multicellular organism growth"/>
    <property type="evidence" value="ECO:0007669"/>
    <property type="project" value="EnsemblMetazoa"/>
</dbReference>
<dbReference type="GO" id="GO:0045500">
    <property type="term" value="P:sevenless signaling pathway"/>
    <property type="evidence" value="ECO:0007669"/>
    <property type="project" value="EnsemblMetazoa"/>
</dbReference>
<dbReference type="GO" id="GO:0048865">
    <property type="term" value="P:stem cell fate commitment"/>
    <property type="evidence" value="ECO:0007669"/>
    <property type="project" value="EnsemblMetazoa"/>
</dbReference>
<dbReference type="GO" id="GO:0072089">
    <property type="term" value="P:stem cell proliferation"/>
    <property type="evidence" value="ECO:0007669"/>
    <property type="project" value="EnsemblMetazoa"/>
</dbReference>
<dbReference type="GO" id="GO:0007430">
    <property type="term" value="P:terminal branching, open tracheal system"/>
    <property type="evidence" value="ECO:0007669"/>
    <property type="project" value="EnsemblMetazoa"/>
</dbReference>
<dbReference type="GO" id="GO:0007362">
    <property type="term" value="P:terminal region determination"/>
    <property type="evidence" value="ECO:0007669"/>
    <property type="project" value="EnsemblMetazoa"/>
</dbReference>
<dbReference type="GO" id="GO:0008293">
    <property type="term" value="P:torso signaling pathway"/>
    <property type="evidence" value="ECO:0007669"/>
    <property type="project" value="EnsemblMetazoa"/>
</dbReference>
<dbReference type="GO" id="GO:0060438">
    <property type="term" value="P:trachea development"/>
    <property type="evidence" value="ECO:0007669"/>
    <property type="project" value="EnsemblMetazoa"/>
</dbReference>
<dbReference type="GO" id="GO:0007426">
    <property type="term" value="P:tracheal outgrowth, open tracheal system"/>
    <property type="evidence" value="ECO:0007669"/>
    <property type="project" value="EnsemblMetazoa"/>
</dbReference>
<dbReference type="GO" id="GO:0048010">
    <property type="term" value="P:vascular endothelial growth factor receptor signaling pathway"/>
    <property type="evidence" value="ECO:0007669"/>
    <property type="project" value="EnsemblMetazoa"/>
</dbReference>
<dbReference type="GO" id="GO:0035313">
    <property type="term" value="P:wound healing, spreading of epidermal cells"/>
    <property type="evidence" value="ECO:0007669"/>
    <property type="project" value="EnsemblMetazoa"/>
</dbReference>
<dbReference type="CDD" id="cd04138">
    <property type="entry name" value="H_N_K_Ras_like"/>
    <property type="match status" value="1"/>
</dbReference>
<dbReference type="FunFam" id="3.40.50.300:FF:000096">
    <property type="entry name" value="KRAS proto-oncogene, GTPase"/>
    <property type="match status" value="1"/>
</dbReference>
<dbReference type="Gene3D" id="3.40.50.300">
    <property type="entry name" value="P-loop containing nucleotide triphosphate hydrolases"/>
    <property type="match status" value="1"/>
</dbReference>
<dbReference type="InterPro" id="IPR027417">
    <property type="entry name" value="P-loop_NTPase"/>
</dbReference>
<dbReference type="InterPro" id="IPR005225">
    <property type="entry name" value="Small_GTP-bd"/>
</dbReference>
<dbReference type="InterPro" id="IPR001806">
    <property type="entry name" value="Small_GTPase"/>
</dbReference>
<dbReference type="InterPro" id="IPR020849">
    <property type="entry name" value="Small_GTPase_Ras-type"/>
</dbReference>
<dbReference type="NCBIfam" id="TIGR00231">
    <property type="entry name" value="small_GTP"/>
    <property type="match status" value="1"/>
</dbReference>
<dbReference type="PANTHER" id="PTHR24070">
    <property type="entry name" value="RAS, DI-RAS, AND RHEB FAMILY MEMBERS OF SMALL GTPASE SUPERFAMILY"/>
    <property type="match status" value="1"/>
</dbReference>
<dbReference type="Pfam" id="PF00071">
    <property type="entry name" value="Ras"/>
    <property type="match status" value="1"/>
</dbReference>
<dbReference type="PRINTS" id="PR00449">
    <property type="entry name" value="RASTRNSFRMNG"/>
</dbReference>
<dbReference type="SMART" id="SM00175">
    <property type="entry name" value="RAB"/>
    <property type="match status" value="1"/>
</dbReference>
<dbReference type="SMART" id="SM00176">
    <property type="entry name" value="RAN"/>
    <property type="match status" value="1"/>
</dbReference>
<dbReference type="SMART" id="SM00173">
    <property type="entry name" value="RAS"/>
    <property type="match status" value="1"/>
</dbReference>
<dbReference type="SMART" id="SM00174">
    <property type="entry name" value="RHO"/>
    <property type="match status" value="1"/>
</dbReference>
<dbReference type="SUPFAM" id="SSF52540">
    <property type="entry name" value="P-loop containing nucleoside triphosphate hydrolases"/>
    <property type="match status" value="1"/>
</dbReference>
<dbReference type="PROSITE" id="PS51421">
    <property type="entry name" value="RAS"/>
    <property type="match status" value="1"/>
</dbReference>
<organism>
    <name type="scientific">Drosophila virilis</name>
    <name type="common">Fruit fly</name>
    <dbReference type="NCBI Taxonomy" id="7244"/>
    <lineage>
        <taxon>Eukaryota</taxon>
        <taxon>Metazoa</taxon>
        <taxon>Ecdysozoa</taxon>
        <taxon>Arthropoda</taxon>
        <taxon>Hexapoda</taxon>
        <taxon>Insecta</taxon>
        <taxon>Pterygota</taxon>
        <taxon>Neoptera</taxon>
        <taxon>Endopterygota</taxon>
        <taxon>Diptera</taxon>
        <taxon>Brachycera</taxon>
        <taxon>Muscomorpha</taxon>
        <taxon>Ephydroidea</taxon>
        <taxon>Drosophilidae</taxon>
        <taxon>Drosophila</taxon>
    </lineage>
</organism>
<comment type="function">
    <text evidence="1 2">Ras proteins bind GDP/GTP and possess intrinsic GTPase activity. Plays a role in eye development by regulating cell growth, survival of postmitotic ommatidial cells and differentiation of photoreceptor cells. During larval development, mediates Ptth/tor signaling leading to the production of ecdysone, a hormone required for the initiation of metamorphosis.</text>
</comment>
<comment type="catalytic activity">
    <reaction evidence="1">
        <text>GTP + H2O = GDP + phosphate + H(+)</text>
        <dbReference type="Rhea" id="RHEA:19669"/>
        <dbReference type="ChEBI" id="CHEBI:15377"/>
        <dbReference type="ChEBI" id="CHEBI:15378"/>
        <dbReference type="ChEBI" id="CHEBI:37565"/>
        <dbReference type="ChEBI" id="CHEBI:43474"/>
        <dbReference type="ChEBI" id="CHEBI:58189"/>
        <dbReference type="EC" id="3.6.5.2"/>
    </reaction>
</comment>
<comment type="activity regulation">
    <text>Alternates between an inactive form bound to GDP and an active form bound to GTP. Activated by a guanine nucleotide-exchange factor (GEF) and inactivated by a GTPase-activating protein (GAP).</text>
</comment>
<comment type="subcellular location">
    <subcellularLocation>
        <location evidence="2">Cell membrane</location>
        <topology evidence="2">Lipid-anchor</topology>
        <orientation evidence="2">Cytoplasmic side</orientation>
    </subcellularLocation>
</comment>
<comment type="similarity">
    <text evidence="3">Belongs to the small GTPase superfamily. Ras family.</text>
</comment>
<evidence type="ECO:0000250" key="1">
    <source>
        <dbReference type="UniProtKB" id="P01112"/>
    </source>
</evidence>
<evidence type="ECO:0000250" key="2">
    <source>
        <dbReference type="UniProtKB" id="P08646"/>
    </source>
</evidence>
<evidence type="ECO:0000255" key="3"/>
<evidence type="ECO:0000312" key="4">
    <source>
        <dbReference type="EMBL" id="EDW66895.1"/>
    </source>
</evidence>
<proteinExistence type="inferred from homology"/>
<accession>B4LY29</accession>
<name>RAS1_DROVI</name>
<sequence>MTEYKLVVVGAGGVGKSALTIQLIQNHFVDEYDPTIEDSYRKQVVIDGETCLLDILDTAGQEEYSAMRDQYMRTGEGFLLVFAVNSAKSFEDIGTYREQIKRVKDAEEVPMVLVGNKCDLASWNVQNEQAREVAKQYGIPYIETSAKTRMGVDDAFYTLVREIRKDKDNKGRKGRKTNKPNRRFKCKML</sequence>